<sequence>MRGAILATAAAFAGTAVADMHMRRHAHEGLHHRALHASSAVPEEECGCTTEVITYWGEPTTIPLSVPTSTVTSETTETVHSTSYSTVTVTATSSAAPVETPSETPSPTPEVTLPTAGVTSYSETGTYTIPATTITVTDTTTVCGATTTELPSGTHTYGGVTTIVETATTITCPYATVKPTGSTVTSVIETTTYVCPSAGTYTIAPTTTFVPTSTVVVYPTPETVTPGTYTNPGTTITVTRTEDVYVCPYTNGNVPTSVPALPTTSAASTTTAVPSSSTTTSSATSVPTGASGNKMGMTFTPYNNDGSCMAKNDVLEQVGLIKGKGFSHVRVYGTDCHTLEYVGAACSTHGLKMILGVNVEGSTGFDGARSQFKDITNWGQWDLVSLIVVGNEVVTSNIASAAQLASFVSEGASAFSAAGYTGQVTTAEPIDVWLSNGATLCPVVDILGANLHPFFNPEFTAAEAGTLVSNQIKDLKQVCTGKDVINLETGWPNAGSANGKAIPGQSQQTTAIKSLVEKVGDVSVFFSYADDGWKSKFATSDKYNVEQHWGCIDQF</sequence>
<accession>Q5BD29</accession>
<accession>C8VMY9</accession>
<accession>Q1HFV1</accession>
<keyword id="KW-0119">Carbohydrate metabolism</keyword>
<keyword id="KW-0134">Cell wall</keyword>
<keyword id="KW-0136">Cellulose degradation</keyword>
<keyword id="KW-0326">Glycosidase</keyword>
<keyword id="KW-0378">Hydrolase</keyword>
<keyword id="KW-0624">Polysaccharide degradation</keyword>
<keyword id="KW-1185">Reference proteome</keyword>
<keyword id="KW-0964">Secreted</keyword>
<keyword id="KW-0732">Signal</keyword>
<evidence type="ECO:0000250" key="1"/>
<evidence type="ECO:0000250" key="2">
    <source>
        <dbReference type="UniProtKB" id="O22317"/>
    </source>
</evidence>
<evidence type="ECO:0000255" key="3"/>
<evidence type="ECO:0000256" key="4">
    <source>
        <dbReference type="SAM" id="MobiDB-lite"/>
    </source>
</evidence>
<evidence type="ECO:0000269" key="5">
    <source>
    </source>
</evidence>
<evidence type="ECO:0000305" key="6"/>
<reference key="1">
    <citation type="journal article" date="2006" name="Proc. Natl. Acad. Sci. U.S.A.">
        <title>Development and application of a suite of polysaccharide-degrading enzymes for analyzing plant cell walls.</title>
        <authorList>
            <person name="Bauer S."/>
            <person name="Vasu P."/>
            <person name="Persson S."/>
            <person name="Mort A.J."/>
            <person name="Somerville C.R."/>
        </authorList>
    </citation>
    <scope>NUCLEOTIDE SEQUENCE [MRNA]</scope>
    <source>
        <strain>FGSC A4 / ATCC 38163 / CBS 112.46 / NRRL 194 / M139</strain>
    </source>
</reference>
<reference key="2">
    <citation type="journal article" date="2005" name="Nature">
        <title>Sequencing of Aspergillus nidulans and comparative analysis with A. fumigatus and A. oryzae.</title>
        <authorList>
            <person name="Galagan J.E."/>
            <person name="Calvo S.E."/>
            <person name="Cuomo C."/>
            <person name="Ma L.-J."/>
            <person name="Wortman J.R."/>
            <person name="Batzoglou S."/>
            <person name="Lee S.-I."/>
            <person name="Bastuerkmen M."/>
            <person name="Spevak C.C."/>
            <person name="Clutterbuck J."/>
            <person name="Kapitonov V."/>
            <person name="Jurka J."/>
            <person name="Scazzocchio C."/>
            <person name="Farman M.L."/>
            <person name="Butler J."/>
            <person name="Purcell S."/>
            <person name="Harris S."/>
            <person name="Braus G.H."/>
            <person name="Draht O."/>
            <person name="Busch S."/>
            <person name="D'Enfert C."/>
            <person name="Bouchier C."/>
            <person name="Goldman G.H."/>
            <person name="Bell-Pedersen D."/>
            <person name="Griffiths-Jones S."/>
            <person name="Doonan J.H."/>
            <person name="Yu J."/>
            <person name="Vienken K."/>
            <person name="Pain A."/>
            <person name="Freitag M."/>
            <person name="Selker E.U."/>
            <person name="Archer D.B."/>
            <person name="Penalva M.A."/>
            <person name="Oakley B.R."/>
            <person name="Momany M."/>
            <person name="Tanaka T."/>
            <person name="Kumagai T."/>
            <person name="Asai K."/>
            <person name="Machida M."/>
            <person name="Nierman W.C."/>
            <person name="Denning D.W."/>
            <person name="Caddick M.X."/>
            <person name="Hynes M."/>
            <person name="Paoletti M."/>
            <person name="Fischer R."/>
            <person name="Miller B.L."/>
            <person name="Dyer P.S."/>
            <person name="Sachs M.S."/>
            <person name="Osmani S.A."/>
            <person name="Birren B.W."/>
        </authorList>
    </citation>
    <scope>NUCLEOTIDE SEQUENCE [LARGE SCALE GENOMIC DNA]</scope>
    <source>
        <strain>FGSC A4 / ATCC 38163 / CBS 112.46 / NRRL 194 / M139</strain>
    </source>
</reference>
<reference key="3">
    <citation type="journal article" date="2009" name="Fungal Genet. Biol.">
        <title>The 2008 update of the Aspergillus nidulans genome annotation: a community effort.</title>
        <authorList>
            <person name="Wortman J.R."/>
            <person name="Gilsenan J.M."/>
            <person name="Joardar V."/>
            <person name="Deegan J."/>
            <person name="Clutterbuck J."/>
            <person name="Andersen M.R."/>
            <person name="Archer D."/>
            <person name="Bencina M."/>
            <person name="Braus G."/>
            <person name="Coutinho P."/>
            <person name="von Dohren H."/>
            <person name="Doonan J."/>
            <person name="Driessen A.J."/>
            <person name="Durek P."/>
            <person name="Espeso E."/>
            <person name="Fekete E."/>
            <person name="Flipphi M."/>
            <person name="Estrada C.G."/>
            <person name="Geysens S."/>
            <person name="Goldman G."/>
            <person name="de Groot P.W."/>
            <person name="Hansen K."/>
            <person name="Harris S.D."/>
            <person name="Heinekamp T."/>
            <person name="Helmstaedt K."/>
            <person name="Henrissat B."/>
            <person name="Hofmann G."/>
            <person name="Homan T."/>
            <person name="Horio T."/>
            <person name="Horiuchi H."/>
            <person name="James S."/>
            <person name="Jones M."/>
            <person name="Karaffa L."/>
            <person name="Karanyi Z."/>
            <person name="Kato M."/>
            <person name="Keller N."/>
            <person name="Kelly D.E."/>
            <person name="Kiel J.A."/>
            <person name="Kim J.M."/>
            <person name="van der Klei I.J."/>
            <person name="Klis F.M."/>
            <person name="Kovalchuk A."/>
            <person name="Krasevec N."/>
            <person name="Kubicek C.P."/>
            <person name="Liu B."/>
            <person name="Maccabe A."/>
            <person name="Meyer V."/>
            <person name="Mirabito P."/>
            <person name="Miskei M."/>
            <person name="Mos M."/>
            <person name="Mullins J."/>
            <person name="Nelson D.R."/>
            <person name="Nielsen J."/>
            <person name="Oakley B.R."/>
            <person name="Osmani S.A."/>
            <person name="Pakula T."/>
            <person name="Paszewski A."/>
            <person name="Paulsen I."/>
            <person name="Pilsyk S."/>
            <person name="Pocsi I."/>
            <person name="Punt P.J."/>
            <person name="Ram A.F."/>
            <person name="Ren Q."/>
            <person name="Robellet X."/>
            <person name="Robson G."/>
            <person name="Seiboth B."/>
            <person name="van Solingen P."/>
            <person name="Specht T."/>
            <person name="Sun J."/>
            <person name="Taheri-Talesh N."/>
            <person name="Takeshita N."/>
            <person name="Ussery D."/>
            <person name="vanKuyk P.A."/>
            <person name="Visser H."/>
            <person name="van de Vondervoort P.J."/>
            <person name="de Vries R.P."/>
            <person name="Walton J."/>
            <person name="Xiang X."/>
            <person name="Xiong Y."/>
            <person name="Zeng A.P."/>
            <person name="Brandt B.W."/>
            <person name="Cornell M.J."/>
            <person name="van den Hondel C.A."/>
            <person name="Visser J."/>
            <person name="Oliver S.G."/>
            <person name="Turner G."/>
        </authorList>
    </citation>
    <scope>GENOME REANNOTATION</scope>
    <source>
        <strain>FGSC A4 / ATCC 38163 / CBS 112.46 / NRRL 194 / M139</strain>
    </source>
</reference>
<reference key="4">
    <citation type="journal article" date="2009" name="Fungal Genet. Biol.">
        <title>Comprehensive genomic analysis of cell wall genes in Aspergillus nidulans.</title>
        <authorList>
            <person name="de Groot P.W."/>
            <person name="Brandt B.W."/>
            <person name="Horiuchi H."/>
            <person name="Ram A.F."/>
            <person name="de Koster C.G."/>
            <person name="Klis F.M."/>
        </authorList>
    </citation>
    <scope>IDENTIFICATION BY MASS SPECTROMETRY</scope>
    <scope>SUBCELLULAR LOCATION</scope>
</reference>
<feature type="signal peptide" evidence="3">
    <location>
        <begin position="1"/>
        <end position="18"/>
    </location>
</feature>
<feature type="chain" id="PRO_0000395136" description="Probable beta-glucosidase btgE">
    <location>
        <begin position="19"/>
        <end position="555"/>
    </location>
</feature>
<feature type="region of interest" description="Disordered" evidence="4">
    <location>
        <begin position="92"/>
        <end position="114"/>
    </location>
</feature>
<feature type="region of interest" description="Disordered" evidence="4">
    <location>
        <begin position="263"/>
        <end position="290"/>
    </location>
</feature>
<feature type="compositionally biased region" description="Low complexity" evidence="4">
    <location>
        <begin position="263"/>
        <end position="288"/>
    </location>
</feature>
<feature type="active site" description="Proton donor" evidence="2">
    <location>
        <position position="392"/>
    </location>
</feature>
<feature type="active site" description="Nucleophile" evidence="2">
    <location>
        <position position="488"/>
    </location>
</feature>
<gene>
    <name type="primary">btgE</name>
    <name type="ORF">AN1551</name>
</gene>
<name>BTGE_EMENI</name>
<dbReference type="EC" id="3.2.1.21"/>
<dbReference type="EMBL" id="DQ490473">
    <property type="protein sequence ID" value="ABF50849.1"/>
    <property type="molecule type" value="mRNA"/>
</dbReference>
<dbReference type="EMBL" id="AACD01000025">
    <property type="protein sequence ID" value="EAA64258.1"/>
    <property type="molecule type" value="Genomic_DNA"/>
</dbReference>
<dbReference type="EMBL" id="BN001307">
    <property type="protein sequence ID" value="CBF85093.1"/>
    <property type="molecule type" value="Genomic_DNA"/>
</dbReference>
<dbReference type="RefSeq" id="XP_659155.1">
    <property type="nucleotide sequence ID" value="XM_654063.1"/>
</dbReference>
<dbReference type="SMR" id="Q5BD29"/>
<dbReference type="STRING" id="227321.Q5BD29"/>
<dbReference type="CAZy" id="GH17">
    <property type="family name" value="Glycoside Hydrolase Family 17"/>
</dbReference>
<dbReference type="EnsemblFungi" id="CBF85093">
    <property type="protein sequence ID" value="CBF85093"/>
    <property type="gene ID" value="ANIA_01551"/>
</dbReference>
<dbReference type="KEGG" id="ani:ANIA_01551"/>
<dbReference type="VEuPathDB" id="FungiDB:AN1551"/>
<dbReference type="eggNOG" id="ENOG502QS0R">
    <property type="taxonomic scope" value="Eukaryota"/>
</dbReference>
<dbReference type="HOGENOM" id="CLU_027285_2_1_1"/>
<dbReference type="InParanoid" id="Q5BD29"/>
<dbReference type="OMA" id="VVCPYAT"/>
<dbReference type="OrthoDB" id="4082933at2759"/>
<dbReference type="UniPathway" id="UPA00696"/>
<dbReference type="Proteomes" id="UP000000560">
    <property type="component" value="Chromosome VII"/>
</dbReference>
<dbReference type="GO" id="GO:0009986">
    <property type="term" value="C:cell surface"/>
    <property type="evidence" value="ECO:0000318"/>
    <property type="project" value="GO_Central"/>
</dbReference>
<dbReference type="GO" id="GO:0005576">
    <property type="term" value="C:extracellular region"/>
    <property type="evidence" value="ECO:0000318"/>
    <property type="project" value="GO_Central"/>
</dbReference>
<dbReference type="GO" id="GO:0009277">
    <property type="term" value="C:fungal-type cell wall"/>
    <property type="evidence" value="ECO:0000318"/>
    <property type="project" value="GO_Central"/>
</dbReference>
<dbReference type="GO" id="GO:0042973">
    <property type="term" value="F:glucan endo-1,3-beta-D-glucosidase activity"/>
    <property type="evidence" value="ECO:0000318"/>
    <property type="project" value="GO_Central"/>
</dbReference>
<dbReference type="GO" id="GO:0071555">
    <property type="term" value="P:cell wall organization"/>
    <property type="evidence" value="ECO:0000318"/>
    <property type="project" value="GO_Central"/>
</dbReference>
<dbReference type="GO" id="GO:0030245">
    <property type="term" value="P:cellulose catabolic process"/>
    <property type="evidence" value="ECO:0007669"/>
    <property type="project" value="UniProtKB-UniPathway"/>
</dbReference>
<dbReference type="Gene3D" id="3.20.20.80">
    <property type="entry name" value="Glycosidases"/>
    <property type="match status" value="2"/>
</dbReference>
<dbReference type="InterPro" id="IPR050732">
    <property type="entry name" value="Beta-glucan_modifiers"/>
</dbReference>
<dbReference type="InterPro" id="IPR017853">
    <property type="entry name" value="Glycoside_hydrolase_SF"/>
</dbReference>
<dbReference type="PANTHER" id="PTHR16631:SF24">
    <property type="entry name" value="FAMILY 17 GLUCOSIDASE SCW11-RELATED"/>
    <property type="match status" value="1"/>
</dbReference>
<dbReference type="PANTHER" id="PTHR16631">
    <property type="entry name" value="GLUCAN 1,3-BETA-GLUCOSIDASE"/>
    <property type="match status" value="1"/>
</dbReference>
<dbReference type="SUPFAM" id="SSF51445">
    <property type="entry name" value="(Trans)glycosidases"/>
    <property type="match status" value="1"/>
</dbReference>
<protein>
    <recommendedName>
        <fullName>Probable beta-glucosidase btgE</fullName>
        <ecNumber>3.2.1.21</ecNumber>
    </recommendedName>
    <alternativeName>
        <fullName>Beta-D-glucoside glucohydrolase btgE</fullName>
    </alternativeName>
    <alternativeName>
        <fullName>Cellobiase btgE</fullName>
    </alternativeName>
    <alternativeName>
        <fullName>Gentiobiase btgE</fullName>
    </alternativeName>
</protein>
<comment type="function">
    <text evidence="1">Beta-glucosidases are one of a number of cellulolytic enzymes involved in the degradation of cellulosic biomass. Catalyzes the last step releasing glucose from the inhibitory cellobiose (By similarity).</text>
</comment>
<comment type="catalytic activity">
    <reaction>
        <text>Hydrolysis of terminal, non-reducing beta-D-glucosyl residues with release of beta-D-glucose.</text>
        <dbReference type="EC" id="3.2.1.21"/>
    </reaction>
</comment>
<comment type="pathway">
    <text>Glycan metabolism; cellulose degradation.</text>
</comment>
<comment type="subcellular location">
    <subcellularLocation>
        <location evidence="5">Secreted</location>
        <location evidence="5">Cell wall</location>
    </subcellularLocation>
    <text>Covalently-linked to the cell wall.</text>
</comment>
<comment type="similarity">
    <text evidence="6">Belongs to the glycosyl hydrolase 17 family.</text>
</comment>
<proteinExistence type="evidence at protein level"/>
<organism>
    <name type="scientific">Emericella nidulans (strain FGSC A4 / ATCC 38163 / CBS 112.46 / NRRL 194 / M139)</name>
    <name type="common">Aspergillus nidulans</name>
    <dbReference type="NCBI Taxonomy" id="227321"/>
    <lineage>
        <taxon>Eukaryota</taxon>
        <taxon>Fungi</taxon>
        <taxon>Dikarya</taxon>
        <taxon>Ascomycota</taxon>
        <taxon>Pezizomycotina</taxon>
        <taxon>Eurotiomycetes</taxon>
        <taxon>Eurotiomycetidae</taxon>
        <taxon>Eurotiales</taxon>
        <taxon>Aspergillaceae</taxon>
        <taxon>Aspergillus</taxon>
        <taxon>Aspergillus subgen. Nidulantes</taxon>
    </lineage>
</organism>